<accession>B8GRI2</accession>
<reference key="1">
    <citation type="journal article" date="2011" name="Stand. Genomic Sci.">
        <title>Complete genome sequence of 'Thioalkalivibrio sulfidophilus' HL-EbGr7.</title>
        <authorList>
            <person name="Muyzer G."/>
            <person name="Sorokin D.Y."/>
            <person name="Mavromatis K."/>
            <person name="Lapidus A."/>
            <person name="Clum A."/>
            <person name="Ivanova N."/>
            <person name="Pati A."/>
            <person name="d'Haeseleer P."/>
            <person name="Woyke T."/>
            <person name="Kyrpides N.C."/>
        </authorList>
    </citation>
    <scope>NUCLEOTIDE SEQUENCE [LARGE SCALE GENOMIC DNA]</scope>
    <source>
        <strain>HL-EbGR7</strain>
    </source>
</reference>
<gene>
    <name evidence="1" type="primary">rpmI</name>
    <name type="ordered locus">Tgr7_1452</name>
</gene>
<name>RL35_THISH</name>
<organism>
    <name type="scientific">Thioalkalivibrio sulfidiphilus (strain HL-EbGR7)</name>
    <dbReference type="NCBI Taxonomy" id="396588"/>
    <lineage>
        <taxon>Bacteria</taxon>
        <taxon>Pseudomonadati</taxon>
        <taxon>Pseudomonadota</taxon>
        <taxon>Gammaproteobacteria</taxon>
        <taxon>Chromatiales</taxon>
        <taxon>Ectothiorhodospiraceae</taxon>
        <taxon>Thioalkalivibrio</taxon>
    </lineage>
</organism>
<dbReference type="EMBL" id="CP001339">
    <property type="protein sequence ID" value="ACL72536.1"/>
    <property type="molecule type" value="Genomic_DNA"/>
</dbReference>
<dbReference type="RefSeq" id="WP_012638019.1">
    <property type="nucleotide sequence ID" value="NC_011901.1"/>
</dbReference>
<dbReference type="SMR" id="B8GRI2"/>
<dbReference type="STRING" id="396588.Tgr7_1452"/>
<dbReference type="KEGG" id="tgr:Tgr7_1452"/>
<dbReference type="eggNOG" id="COG0291">
    <property type="taxonomic scope" value="Bacteria"/>
</dbReference>
<dbReference type="HOGENOM" id="CLU_169643_1_1_6"/>
<dbReference type="OrthoDB" id="47476at2"/>
<dbReference type="Proteomes" id="UP000002383">
    <property type="component" value="Chromosome"/>
</dbReference>
<dbReference type="GO" id="GO:0022625">
    <property type="term" value="C:cytosolic large ribosomal subunit"/>
    <property type="evidence" value="ECO:0007669"/>
    <property type="project" value="TreeGrafter"/>
</dbReference>
<dbReference type="GO" id="GO:0003735">
    <property type="term" value="F:structural constituent of ribosome"/>
    <property type="evidence" value="ECO:0007669"/>
    <property type="project" value="InterPro"/>
</dbReference>
<dbReference type="GO" id="GO:0006412">
    <property type="term" value="P:translation"/>
    <property type="evidence" value="ECO:0007669"/>
    <property type="project" value="UniProtKB-UniRule"/>
</dbReference>
<dbReference type="FunFam" id="4.10.410.60:FF:000001">
    <property type="entry name" value="50S ribosomal protein L35"/>
    <property type="match status" value="1"/>
</dbReference>
<dbReference type="Gene3D" id="4.10.410.60">
    <property type="match status" value="1"/>
</dbReference>
<dbReference type="HAMAP" id="MF_00514">
    <property type="entry name" value="Ribosomal_bL35"/>
    <property type="match status" value="1"/>
</dbReference>
<dbReference type="InterPro" id="IPR001706">
    <property type="entry name" value="Ribosomal_bL35"/>
</dbReference>
<dbReference type="InterPro" id="IPR021137">
    <property type="entry name" value="Ribosomal_bL35-like"/>
</dbReference>
<dbReference type="InterPro" id="IPR018265">
    <property type="entry name" value="Ribosomal_bL35_CS"/>
</dbReference>
<dbReference type="InterPro" id="IPR037229">
    <property type="entry name" value="Ribosomal_bL35_sf"/>
</dbReference>
<dbReference type="NCBIfam" id="TIGR00001">
    <property type="entry name" value="rpmI_bact"/>
    <property type="match status" value="1"/>
</dbReference>
<dbReference type="PANTHER" id="PTHR33343">
    <property type="entry name" value="54S RIBOSOMAL PROTEIN BL35M"/>
    <property type="match status" value="1"/>
</dbReference>
<dbReference type="PANTHER" id="PTHR33343:SF1">
    <property type="entry name" value="LARGE RIBOSOMAL SUBUNIT PROTEIN BL35M"/>
    <property type="match status" value="1"/>
</dbReference>
<dbReference type="Pfam" id="PF01632">
    <property type="entry name" value="Ribosomal_L35p"/>
    <property type="match status" value="1"/>
</dbReference>
<dbReference type="PRINTS" id="PR00064">
    <property type="entry name" value="RIBOSOMALL35"/>
</dbReference>
<dbReference type="SUPFAM" id="SSF143034">
    <property type="entry name" value="L35p-like"/>
    <property type="match status" value="1"/>
</dbReference>
<dbReference type="PROSITE" id="PS00936">
    <property type="entry name" value="RIBOSOMAL_L35"/>
    <property type="match status" value="1"/>
</dbReference>
<keyword id="KW-1185">Reference proteome</keyword>
<keyword id="KW-0687">Ribonucleoprotein</keyword>
<keyword id="KW-0689">Ribosomal protein</keyword>
<sequence>MPKIKTNRGAAKRFKPTGSGGFKRAQSHRRHILTKKSTKRKRHLRSTGMIAECDKASVRQMLPHV</sequence>
<feature type="chain" id="PRO_1000194089" description="Large ribosomal subunit protein bL35">
    <location>
        <begin position="1"/>
        <end position="65"/>
    </location>
</feature>
<feature type="region of interest" description="Disordered" evidence="2">
    <location>
        <begin position="1"/>
        <end position="46"/>
    </location>
</feature>
<feature type="compositionally biased region" description="Basic residues" evidence="2">
    <location>
        <begin position="25"/>
        <end position="45"/>
    </location>
</feature>
<evidence type="ECO:0000255" key="1">
    <source>
        <dbReference type="HAMAP-Rule" id="MF_00514"/>
    </source>
</evidence>
<evidence type="ECO:0000256" key="2">
    <source>
        <dbReference type="SAM" id="MobiDB-lite"/>
    </source>
</evidence>
<evidence type="ECO:0000305" key="3"/>
<protein>
    <recommendedName>
        <fullName evidence="1">Large ribosomal subunit protein bL35</fullName>
    </recommendedName>
    <alternativeName>
        <fullName evidence="3">50S ribosomal protein L35</fullName>
    </alternativeName>
</protein>
<comment type="similarity">
    <text evidence="1">Belongs to the bacterial ribosomal protein bL35 family.</text>
</comment>
<proteinExistence type="inferred from homology"/>